<name>S2543_HUMAN</name>
<accession>Q8WUT9</accession>
<accession>O75854</accession>
<accession>Q8N9L5</accession>
<organism>
    <name type="scientific">Homo sapiens</name>
    <name type="common">Human</name>
    <dbReference type="NCBI Taxonomy" id="9606"/>
    <lineage>
        <taxon>Eukaryota</taxon>
        <taxon>Metazoa</taxon>
        <taxon>Chordata</taxon>
        <taxon>Craniata</taxon>
        <taxon>Vertebrata</taxon>
        <taxon>Euteleostomi</taxon>
        <taxon>Mammalia</taxon>
        <taxon>Eutheria</taxon>
        <taxon>Euarchontoglires</taxon>
        <taxon>Primates</taxon>
        <taxon>Haplorrhini</taxon>
        <taxon>Catarrhini</taxon>
        <taxon>Hominidae</taxon>
        <taxon>Homo</taxon>
    </lineage>
</organism>
<comment type="subcellular location">
    <subcellularLocation>
        <location evidence="1">Mitochondrion inner membrane</location>
        <topology evidence="1">Multi-pass membrane protein</topology>
    </subcellularLocation>
</comment>
<comment type="alternative products">
    <event type="alternative splicing"/>
    <isoform>
        <id>Q8WUT9-1</id>
        <name>1</name>
        <sequence type="displayed"/>
    </isoform>
    <isoform>
        <id>Q8WUT9-2</id>
        <name>2</name>
        <sequence type="described" ref="VSP_026245"/>
    </isoform>
</comment>
<comment type="similarity">
    <text evidence="5">Belongs to the mitochondrial carrier (TC 2.A.29) family.</text>
</comment>
<comment type="sequence caution" evidence="5">
    <conflict type="erroneous gene model prediction">
        <sequence resource="EMBL-CDS" id="AAC62432"/>
    </conflict>
</comment>
<keyword id="KW-0025">Alternative splicing</keyword>
<keyword id="KW-0472">Membrane</keyword>
<keyword id="KW-0496">Mitochondrion</keyword>
<keyword id="KW-0999">Mitochondrion inner membrane</keyword>
<keyword id="KW-1267">Proteomics identification</keyword>
<keyword id="KW-1185">Reference proteome</keyword>
<keyword id="KW-0677">Repeat</keyword>
<keyword id="KW-0812">Transmembrane</keyword>
<keyword id="KW-1133">Transmembrane helix</keyword>
<keyword id="KW-0813">Transport</keyword>
<feature type="chain" id="PRO_0000291823" description="Solute carrier family 25 member 43">
    <location>
        <begin position="1"/>
        <end position="341"/>
    </location>
</feature>
<feature type="transmembrane region" description="Helical; Name=1" evidence="2">
    <location>
        <begin position="16"/>
        <end position="36"/>
    </location>
</feature>
<feature type="transmembrane region" description="Helical; Name=2" evidence="2">
    <location>
        <begin position="68"/>
        <end position="88"/>
    </location>
</feature>
<feature type="transmembrane region" description="Helical; Name=3" evidence="2">
    <location>
        <begin position="110"/>
        <end position="130"/>
    </location>
</feature>
<feature type="transmembrane region" description="Helical; Name=4" evidence="2">
    <location>
        <begin position="166"/>
        <end position="186"/>
    </location>
</feature>
<feature type="transmembrane region" description="Helical; Name=5" evidence="2">
    <location>
        <begin position="205"/>
        <end position="225"/>
    </location>
</feature>
<feature type="transmembrane region" description="Helical; Name=6" evidence="2">
    <location>
        <begin position="262"/>
        <end position="282"/>
    </location>
</feature>
<feature type="repeat" description="Solcar 1">
    <location>
        <begin position="11"/>
        <end position="101"/>
    </location>
</feature>
<feature type="repeat" description="Solcar 2">
    <location>
        <begin position="105"/>
        <end position="185"/>
    </location>
</feature>
<feature type="repeat" description="Solcar 3">
    <location>
        <begin position="200"/>
        <end position="298"/>
    </location>
</feature>
<feature type="splice variant" id="VSP_026245" description="In isoform 2." evidence="4">
    <location>
        <begin position="34"/>
        <end position="85"/>
    </location>
</feature>
<feature type="sequence variant" id="VAR_032865" description="In dbSNP:rs3810755." evidence="3">
    <original>P</original>
    <variation>L</variation>
    <location>
        <position position="334"/>
    </location>
</feature>
<feature type="sequence conflict" description="In Ref. 1; BAC04318." evidence="5" ref="1">
    <original>V</original>
    <variation>A</variation>
    <location>
        <position position="95"/>
    </location>
</feature>
<sequence>MATWRRDGRLTGGQRLLCAGLAGTLSLSLTAPLELATVLAQVGVVRGHARGPWATGHRVWRAEGLRALWKGNAVACLRLFPCSAVQLAAYRKFVVLFTDDLGHISQWSSIMAGSLAGMVSTIVTYPTDLIKTRLIMQNILEPSYRGLLHAFSTIYQQEGFLALYRGVSLTVVGALPFSAGSLLVYMNLEKIWNGPRDQFSLPQNFANVCLAAAVTQTLSFPFETVKRKMQAQSPYLPHSGGVDVHFSGAVDCFRQIVKAQGVLGLWNGLTANLLKIVPYFGIMFSTFEFCKRICLYQNGYILSPLSYKLTPGVDQSLQPQELRELKKFFKTRKPKPKKPTL</sequence>
<gene>
    <name type="primary">SLC25A43</name>
</gene>
<reference key="1">
    <citation type="journal article" date="2004" name="Nat. Genet.">
        <title>Complete sequencing and characterization of 21,243 full-length human cDNAs.</title>
        <authorList>
            <person name="Ota T."/>
            <person name="Suzuki Y."/>
            <person name="Nishikawa T."/>
            <person name="Otsuki T."/>
            <person name="Sugiyama T."/>
            <person name="Irie R."/>
            <person name="Wakamatsu A."/>
            <person name="Hayashi K."/>
            <person name="Sato H."/>
            <person name="Nagai K."/>
            <person name="Kimura K."/>
            <person name="Makita H."/>
            <person name="Sekine M."/>
            <person name="Obayashi M."/>
            <person name="Nishi T."/>
            <person name="Shibahara T."/>
            <person name="Tanaka T."/>
            <person name="Ishii S."/>
            <person name="Yamamoto J."/>
            <person name="Saito K."/>
            <person name="Kawai Y."/>
            <person name="Isono Y."/>
            <person name="Nakamura Y."/>
            <person name="Nagahari K."/>
            <person name="Murakami K."/>
            <person name="Yasuda T."/>
            <person name="Iwayanagi T."/>
            <person name="Wagatsuma M."/>
            <person name="Shiratori A."/>
            <person name="Sudo H."/>
            <person name="Hosoiri T."/>
            <person name="Kaku Y."/>
            <person name="Kodaira H."/>
            <person name="Kondo H."/>
            <person name="Sugawara M."/>
            <person name="Takahashi M."/>
            <person name="Kanda K."/>
            <person name="Yokoi T."/>
            <person name="Furuya T."/>
            <person name="Kikkawa E."/>
            <person name="Omura Y."/>
            <person name="Abe K."/>
            <person name="Kamihara K."/>
            <person name="Katsuta N."/>
            <person name="Sato K."/>
            <person name="Tanikawa M."/>
            <person name="Yamazaki M."/>
            <person name="Ninomiya K."/>
            <person name="Ishibashi T."/>
            <person name="Yamashita H."/>
            <person name="Murakawa K."/>
            <person name="Fujimori K."/>
            <person name="Tanai H."/>
            <person name="Kimata M."/>
            <person name="Watanabe M."/>
            <person name="Hiraoka S."/>
            <person name="Chiba Y."/>
            <person name="Ishida S."/>
            <person name="Ono Y."/>
            <person name="Takiguchi S."/>
            <person name="Watanabe S."/>
            <person name="Yosida M."/>
            <person name="Hotuta T."/>
            <person name="Kusano J."/>
            <person name="Kanehori K."/>
            <person name="Takahashi-Fujii A."/>
            <person name="Hara H."/>
            <person name="Tanase T.-O."/>
            <person name="Nomura Y."/>
            <person name="Togiya S."/>
            <person name="Komai F."/>
            <person name="Hara R."/>
            <person name="Takeuchi K."/>
            <person name="Arita M."/>
            <person name="Imose N."/>
            <person name="Musashino K."/>
            <person name="Yuuki H."/>
            <person name="Oshima A."/>
            <person name="Sasaki N."/>
            <person name="Aotsuka S."/>
            <person name="Yoshikawa Y."/>
            <person name="Matsunawa H."/>
            <person name="Ichihara T."/>
            <person name="Shiohata N."/>
            <person name="Sano S."/>
            <person name="Moriya S."/>
            <person name="Momiyama H."/>
            <person name="Satoh N."/>
            <person name="Takami S."/>
            <person name="Terashima Y."/>
            <person name="Suzuki O."/>
            <person name="Nakagawa S."/>
            <person name="Senoh A."/>
            <person name="Mizoguchi H."/>
            <person name="Goto Y."/>
            <person name="Shimizu F."/>
            <person name="Wakebe H."/>
            <person name="Hishigaki H."/>
            <person name="Watanabe T."/>
            <person name="Sugiyama A."/>
            <person name="Takemoto M."/>
            <person name="Kawakami B."/>
            <person name="Yamazaki M."/>
            <person name="Watanabe K."/>
            <person name="Kumagai A."/>
            <person name="Itakura S."/>
            <person name="Fukuzumi Y."/>
            <person name="Fujimori Y."/>
            <person name="Komiyama M."/>
            <person name="Tashiro H."/>
            <person name="Tanigami A."/>
            <person name="Fujiwara T."/>
            <person name="Ono T."/>
            <person name="Yamada K."/>
            <person name="Fujii Y."/>
            <person name="Ozaki K."/>
            <person name="Hirao M."/>
            <person name="Ohmori Y."/>
            <person name="Kawabata A."/>
            <person name="Hikiji T."/>
            <person name="Kobatake N."/>
            <person name="Inagaki H."/>
            <person name="Ikema Y."/>
            <person name="Okamoto S."/>
            <person name="Okitani R."/>
            <person name="Kawakami T."/>
            <person name="Noguchi S."/>
            <person name="Itoh T."/>
            <person name="Shigeta K."/>
            <person name="Senba T."/>
            <person name="Matsumura K."/>
            <person name="Nakajima Y."/>
            <person name="Mizuno T."/>
            <person name="Morinaga M."/>
            <person name="Sasaki M."/>
            <person name="Togashi T."/>
            <person name="Oyama M."/>
            <person name="Hata H."/>
            <person name="Watanabe M."/>
            <person name="Komatsu T."/>
            <person name="Mizushima-Sugano J."/>
            <person name="Satoh T."/>
            <person name="Shirai Y."/>
            <person name="Takahashi Y."/>
            <person name="Nakagawa K."/>
            <person name="Okumura K."/>
            <person name="Nagase T."/>
            <person name="Nomura N."/>
            <person name="Kikuchi H."/>
            <person name="Masuho Y."/>
            <person name="Yamashita R."/>
            <person name="Nakai K."/>
            <person name="Yada T."/>
            <person name="Nakamura Y."/>
            <person name="Ohara O."/>
            <person name="Isogai T."/>
            <person name="Sugano S."/>
        </authorList>
    </citation>
    <scope>NUCLEOTIDE SEQUENCE [LARGE SCALE MRNA] (ISOFORM 2)</scope>
    <source>
        <tissue>Cerebellum</tissue>
    </source>
</reference>
<reference key="2">
    <citation type="journal article" date="2005" name="Nature">
        <title>The DNA sequence of the human X chromosome.</title>
        <authorList>
            <person name="Ross M.T."/>
            <person name="Grafham D.V."/>
            <person name="Coffey A.J."/>
            <person name="Scherer S."/>
            <person name="McLay K."/>
            <person name="Muzny D."/>
            <person name="Platzer M."/>
            <person name="Howell G.R."/>
            <person name="Burrows C."/>
            <person name="Bird C.P."/>
            <person name="Frankish A."/>
            <person name="Lovell F.L."/>
            <person name="Howe K.L."/>
            <person name="Ashurst J.L."/>
            <person name="Fulton R.S."/>
            <person name="Sudbrak R."/>
            <person name="Wen G."/>
            <person name="Jones M.C."/>
            <person name="Hurles M.E."/>
            <person name="Andrews T.D."/>
            <person name="Scott C.E."/>
            <person name="Searle S."/>
            <person name="Ramser J."/>
            <person name="Whittaker A."/>
            <person name="Deadman R."/>
            <person name="Carter N.P."/>
            <person name="Hunt S.E."/>
            <person name="Chen R."/>
            <person name="Cree A."/>
            <person name="Gunaratne P."/>
            <person name="Havlak P."/>
            <person name="Hodgson A."/>
            <person name="Metzker M.L."/>
            <person name="Richards S."/>
            <person name="Scott G."/>
            <person name="Steffen D."/>
            <person name="Sodergren E."/>
            <person name="Wheeler D.A."/>
            <person name="Worley K.C."/>
            <person name="Ainscough R."/>
            <person name="Ambrose K.D."/>
            <person name="Ansari-Lari M.A."/>
            <person name="Aradhya S."/>
            <person name="Ashwell R.I."/>
            <person name="Babbage A.K."/>
            <person name="Bagguley C.L."/>
            <person name="Ballabio A."/>
            <person name="Banerjee R."/>
            <person name="Barker G.E."/>
            <person name="Barlow K.F."/>
            <person name="Barrett I.P."/>
            <person name="Bates K.N."/>
            <person name="Beare D.M."/>
            <person name="Beasley H."/>
            <person name="Beasley O."/>
            <person name="Beck A."/>
            <person name="Bethel G."/>
            <person name="Blechschmidt K."/>
            <person name="Brady N."/>
            <person name="Bray-Allen S."/>
            <person name="Bridgeman A.M."/>
            <person name="Brown A.J."/>
            <person name="Brown M.J."/>
            <person name="Bonnin D."/>
            <person name="Bruford E.A."/>
            <person name="Buhay C."/>
            <person name="Burch P."/>
            <person name="Burford D."/>
            <person name="Burgess J."/>
            <person name="Burrill W."/>
            <person name="Burton J."/>
            <person name="Bye J.M."/>
            <person name="Carder C."/>
            <person name="Carrel L."/>
            <person name="Chako J."/>
            <person name="Chapman J.C."/>
            <person name="Chavez D."/>
            <person name="Chen E."/>
            <person name="Chen G."/>
            <person name="Chen Y."/>
            <person name="Chen Z."/>
            <person name="Chinault C."/>
            <person name="Ciccodicola A."/>
            <person name="Clark S.Y."/>
            <person name="Clarke G."/>
            <person name="Clee C.M."/>
            <person name="Clegg S."/>
            <person name="Clerc-Blankenburg K."/>
            <person name="Clifford K."/>
            <person name="Cobley V."/>
            <person name="Cole C.G."/>
            <person name="Conquer J.S."/>
            <person name="Corby N."/>
            <person name="Connor R.E."/>
            <person name="David R."/>
            <person name="Davies J."/>
            <person name="Davis C."/>
            <person name="Davis J."/>
            <person name="Delgado O."/>
            <person name="Deshazo D."/>
            <person name="Dhami P."/>
            <person name="Ding Y."/>
            <person name="Dinh H."/>
            <person name="Dodsworth S."/>
            <person name="Draper H."/>
            <person name="Dugan-Rocha S."/>
            <person name="Dunham A."/>
            <person name="Dunn M."/>
            <person name="Durbin K.J."/>
            <person name="Dutta I."/>
            <person name="Eades T."/>
            <person name="Ellwood M."/>
            <person name="Emery-Cohen A."/>
            <person name="Errington H."/>
            <person name="Evans K.L."/>
            <person name="Faulkner L."/>
            <person name="Francis F."/>
            <person name="Frankland J."/>
            <person name="Fraser A.E."/>
            <person name="Galgoczy P."/>
            <person name="Gilbert J."/>
            <person name="Gill R."/>
            <person name="Gloeckner G."/>
            <person name="Gregory S.G."/>
            <person name="Gribble S."/>
            <person name="Griffiths C."/>
            <person name="Grocock R."/>
            <person name="Gu Y."/>
            <person name="Gwilliam R."/>
            <person name="Hamilton C."/>
            <person name="Hart E.A."/>
            <person name="Hawes A."/>
            <person name="Heath P.D."/>
            <person name="Heitmann K."/>
            <person name="Hennig S."/>
            <person name="Hernandez J."/>
            <person name="Hinzmann B."/>
            <person name="Ho S."/>
            <person name="Hoffs M."/>
            <person name="Howden P.J."/>
            <person name="Huckle E.J."/>
            <person name="Hume J."/>
            <person name="Hunt P.J."/>
            <person name="Hunt A.R."/>
            <person name="Isherwood J."/>
            <person name="Jacob L."/>
            <person name="Johnson D."/>
            <person name="Jones S."/>
            <person name="de Jong P.J."/>
            <person name="Joseph S.S."/>
            <person name="Keenan S."/>
            <person name="Kelly S."/>
            <person name="Kershaw J.K."/>
            <person name="Khan Z."/>
            <person name="Kioschis P."/>
            <person name="Klages S."/>
            <person name="Knights A.J."/>
            <person name="Kosiura A."/>
            <person name="Kovar-Smith C."/>
            <person name="Laird G.K."/>
            <person name="Langford C."/>
            <person name="Lawlor S."/>
            <person name="Leversha M."/>
            <person name="Lewis L."/>
            <person name="Liu W."/>
            <person name="Lloyd C."/>
            <person name="Lloyd D.M."/>
            <person name="Loulseged H."/>
            <person name="Loveland J.E."/>
            <person name="Lovell J.D."/>
            <person name="Lozado R."/>
            <person name="Lu J."/>
            <person name="Lyne R."/>
            <person name="Ma J."/>
            <person name="Maheshwari M."/>
            <person name="Matthews L.H."/>
            <person name="McDowall J."/>
            <person name="McLaren S."/>
            <person name="McMurray A."/>
            <person name="Meidl P."/>
            <person name="Meitinger T."/>
            <person name="Milne S."/>
            <person name="Miner G."/>
            <person name="Mistry S.L."/>
            <person name="Morgan M."/>
            <person name="Morris S."/>
            <person name="Mueller I."/>
            <person name="Mullikin J.C."/>
            <person name="Nguyen N."/>
            <person name="Nordsiek G."/>
            <person name="Nyakatura G."/>
            <person name="O'dell C.N."/>
            <person name="Okwuonu G."/>
            <person name="Palmer S."/>
            <person name="Pandian R."/>
            <person name="Parker D."/>
            <person name="Parrish J."/>
            <person name="Pasternak S."/>
            <person name="Patel D."/>
            <person name="Pearce A.V."/>
            <person name="Pearson D.M."/>
            <person name="Pelan S.E."/>
            <person name="Perez L."/>
            <person name="Porter K.M."/>
            <person name="Ramsey Y."/>
            <person name="Reichwald K."/>
            <person name="Rhodes S."/>
            <person name="Ridler K.A."/>
            <person name="Schlessinger D."/>
            <person name="Schueler M.G."/>
            <person name="Sehra H.K."/>
            <person name="Shaw-Smith C."/>
            <person name="Shen H."/>
            <person name="Sheridan E.M."/>
            <person name="Shownkeen R."/>
            <person name="Skuce C.D."/>
            <person name="Smith M.L."/>
            <person name="Sotheran E.C."/>
            <person name="Steingruber H.E."/>
            <person name="Steward C.A."/>
            <person name="Storey R."/>
            <person name="Swann R.M."/>
            <person name="Swarbreck D."/>
            <person name="Tabor P.E."/>
            <person name="Taudien S."/>
            <person name="Taylor T."/>
            <person name="Teague B."/>
            <person name="Thomas K."/>
            <person name="Thorpe A."/>
            <person name="Timms K."/>
            <person name="Tracey A."/>
            <person name="Trevanion S."/>
            <person name="Tromans A.C."/>
            <person name="d'Urso M."/>
            <person name="Verduzco D."/>
            <person name="Villasana D."/>
            <person name="Waldron L."/>
            <person name="Wall M."/>
            <person name="Wang Q."/>
            <person name="Warren J."/>
            <person name="Warry G.L."/>
            <person name="Wei X."/>
            <person name="West A."/>
            <person name="Whitehead S.L."/>
            <person name="Whiteley M.N."/>
            <person name="Wilkinson J.E."/>
            <person name="Willey D.L."/>
            <person name="Williams G."/>
            <person name="Williams L."/>
            <person name="Williamson A."/>
            <person name="Williamson H."/>
            <person name="Wilming L."/>
            <person name="Woodmansey R.L."/>
            <person name="Wray P.W."/>
            <person name="Yen J."/>
            <person name="Zhang J."/>
            <person name="Zhou J."/>
            <person name="Zoghbi H."/>
            <person name="Zorilla S."/>
            <person name="Buck D."/>
            <person name="Reinhardt R."/>
            <person name="Poustka A."/>
            <person name="Rosenthal A."/>
            <person name="Lehrach H."/>
            <person name="Meindl A."/>
            <person name="Minx P.J."/>
            <person name="Hillier L.W."/>
            <person name="Willard H.F."/>
            <person name="Wilson R.K."/>
            <person name="Waterston R.H."/>
            <person name="Rice C.M."/>
            <person name="Vaudin M."/>
            <person name="Coulson A."/>
            <person name="Nelson D.L."/>
            <person name="Weinstock G."/>
            <person name="Sulston J.E."/>
            <person name="Durbin R.M."/>
            <person name="Hubbard T."/>
            <person name="Gibbs R.A."/>
            <person name="Beck S."/>
            <person name="Rogers J."/>
            <person name="Bentley D.R."/>
        </authorList>
    </citation>
    <scope>NUCLEOTIDE SEQUENCE [LARGE SCALE GENOMIC DNA]</scope>
</reference>
<reference key="3">
    <citation type="journal article" date="2004" name="Genome Res.">
        <title>The status, quality, and expansion of the NIH full-length cDNA project: the Mammalian Gene Collection (MGC).</title>
        <authorList>
            <consortium name="The MGC Project Team"/>
        </authorList>
    </citation>
    <scope>NUCLEOTIDE SEQUENCE [LARGE SCALE MRNA] (ISOFORM 1)</scope>
    <scope>VARIANT LEU-334</scope>
    <source>
        <tissue>Brain</tissue>
        <tissue>Lung</tissue>
    </source>
</reference>
<reference key="4">
    <citation type="journal article" date="2006" name="Genomics">
        <title>Fourteen novel human members of mitochondrial solute carrier family 25 (SLC25) widely expressed in the central nervous system.</title>
        <authorList>
            <person name="Haitina T."/>
            <person name="Lindblom J."/>
            <person name="Renstroem T."/>
            <person name="Fredriksson R."/>
        </authorList>
    </citation>
    <scope>IDENTIFICATION</scope>
</reference>
<protein>
    <recommendedName>
        <fullName>Solute carrier family 25 member 43</fullName>
    </recommendedName>
</protein>
<evidence type="ECO:0000250" key="1"/>
<evidence type="ECO:0000255" key="2"/>
<evidence type="ECO:0000269" key="3">
    <source>
    </source>
</evidence>
<evidence type="ECO:0000303" key="4">
    <source>
    </source>
</evidence>
<evidence type="ECO:0000305" key="5"/>
<proteinExistence type="evidence at protein level"/>
<dbReference type="EMBL" id="AK094254">
    <property type="protein sequence ID" value="BAC04318.1"/>
    <property type="molecule type" value="mRNA"/>
</dbReference>
<dbReference type="EMBL" id="AC004973">
    <property type="protein sequence ID" value="AAC62432.1"/>
    <property type="status" value="ALT_SEQ"/>
    <property type="molecule type" value="Genomic_DNA"/>
</dbReference>
<dbReference type="EMBL" id="AC004000">
    <property type="status" value="NOT_ANNOTATED_CDS"/>
    <property type="molecule type" value="Genomic_DNA"/>
</dbReference>
<dbReference type="EMBL" id="BC019584">
    <property type="protein sequence ID" value="AAH19584.1"/>
    <property type="molecule type" value="mRNA"/>
</dbReference>
<dbReference type="EMBL" id="BC071871">
    <property type="protein sequence ID" value="AAH71871.1"/>
    <property type="molecule type" value="mRNA"/>
</dbReference>
<dbReference type="CCDS" id="CCDS14577.1">
    <molecule id="Q8WUT9-1"/>
</dbReference>
<dbReference type="RefSeq" id="NP_660348.2">
    <molecule id="Q8WUT9-1"/>
    <property type="nucleotide sequence ID" value="NM_145305.3"/>
</dbReference>
<dbReference type="SMR" id="Q8WUT9"/>
<dbReference type="BioGRID" id="128469">
    <property type="interactions" value="10"/>
</dbReference>
<dbReference type="FunCoup" id="Q8WUT9">
    <property type="interactions" value="8"/>
</dbReference>
<dbReference type="IntAct" id="Q8WUT9">
    <property type="interactions" value="6"/>
</dbReference>
<dbReference type="STRING" id="9606.ENSP00000217909"/>
<dbReference type="TCDB" id="2.A.29.23.7">
    <property type="family name" value="the mitochondrial carrier (mc) family"/>
</dbReference>
<dbReference type="iPTMnet" id="Q8WUT9"/>
<dbReference type="PhosphoSitePlus" id="Q8WUT9"/>
<dbReference type="BioMuta" id="SLC25A43"/>
<dbReference type="DMDM" id="209572673"/>
<dbReference type="jPOST" id="Q8WUT9"/>
<dbReference type="MassIVE" id="Q8WUT9"/>
<dbReference type="PaxDb" id="9606-ENSP00000217909"/>
<dbReference type="PeptideAtlas" id="Q8WUT9"/>
<dbReference type="Antibodypedia" id="29773">
    <property type="antibodies" value="18 antibodies from 11 providers"/>
</dbReference>
<dbReference type="DNASU" id="203427"/>
<dbReference type="Ensembl" id="ENST00000217909.8">
    <molecule id="Q8WUT9-1"/>
    <property type="protein sequence ID" value="ENSP00000217909.7"/>
    <property type="gene ID" value="ENSG00000077713.19"/>
</dbReference>
<dbReference type="GeneID" id="203427"/>
<dbReference type="KEGG" id="hsa:203427"/>
<dbReference type="MANE-Select" id="ENST00000217909.8">
    <property type="protein sequence ID" value="ENSP00000217909.7"/>
    <property type="RefSeq nucleotide sequence ID" value="NM_145305.3"/>
    <property type="RefSeq protein sequence ID" value="NP_660348.2"/>
</dbReference>
<dbReference type="UCSC" id="uc004erd.4">
    <molecule id="Q8WUT9-1"/>
    <property type="organism name" value="human"/>
</dbReference>
<dbReference type="AGR" id="HGNC:30557"/>
<dbReference type="CTD" id="203427"/>
<dbReference type="DisGeNET" id="203427"/>
<dbReference type="GeneCards" id="SLC25A43"/>
<dbReference type="HGNC" id="HGNC:30557">
    <property type="gene designation" value="SLC25A43"/>
</dbReference>
<dbReference type="HPA" id="ENSG00000077713">
    <property type="expression patterns" value="Low tissue specificity"/>
</dbReference>
<dbReference type="MalaCards" id="SLC25A43"/>
<dbReference type="MIM" id="300641">
    <property type="type" value="gene"/>
</dbReference>
<dbReference type="neXtProt" id="NX_Q8WUT9"/>
<dbReference type="OpenTargets" id="ENSG00000077713"/>
<dbReference type="PharmGKB" id="PA162403704"/>
<dbReference type="VEuPathDB" id="HostDB:ENSG00000077713"/>
<dbReference type="eggNOG" id="KOG0752">
    <property type="taxonomic scope" value="Eukaryota"/>
</dbReference>
<dbReference type="GeneTree" id="ENSGT00940000160686"/>
<dbReference type="HOGENOM" id="CLU_015166_10_3_1"/>
<dbReference type="InParanoid" id="Q8WUT9"/>
<dbReference type="OMA" id="QSFMCVG"/>
<dbReference type="OrthoDB" id="270584at2759"/>
<dbReference type="PAN-GO" id="Q8WUT9">
    <property type="GO annotations" value="0 GO annotations based on evolutionary models"/>
</dbReference>
<dbReference type="PhylomeDB" id="Q8WUT9"/>
<dbReference type="TreeFam" id="TF354298"/>
<dbReference type="PathwayCommons" id="Q8WUT9"/>
<dbReference type="SignaLink" id="Q8WUT9"/>
<dbReference type="BioGRID-ORCS" id="203427">
    <property type="hits" value="11 hits in 784 CRISPR screens"/>
</dbReference>
<dbReference type="ChiTaRS" id="SLC25A43">
    <property type="organism name" value="human"/>
</dbReference>
<dbReference type="GenomeRNAi" id="203427"/>
<dbReference type="Pharos" id="Q8WUT9">
    <property type="development level" value="Tbio"/>
</dbReference>
<dbReference type="PRO" id="PR:Q8WUT9"/>
<dbReference type="Proteomes" id="UP000005640">
    <property type="component" value="Chromosome X"/>
</dbReference>
<dbReference type="RNAct" id="Q8WUT9">
    <property type="molecule type" value="protein"/>
</dbReference>
<dbReference type="Bgee" id="ENSG00000077713">
    <property type="expression patterns" value="Expressed in esophagus squamous epithelium and 155 other cell types or tissues"/>
</dbReference>
<dbReference type="GO" id="GO:0005743">
    <property type="term" value="C:mitochondrial inner membrane"/>
    <property type="evidence" value="ECO:0007669"/>
    <property type="project" value="UniProtKB-SubCell"/>
</dbReference>
<dbReference type="GO" id="GO:0055085">
    <property type="term" value="P:transmembrane transport"/>
    <property type="evidence" value="ECO:0007669"/>
    <property type="project" value="InterPro"/>
</dbReference>
<dbReference type="FunFam" id="1.50.40.10:FF:000098">
    <property type="entry name" value="Mitochondrial substrate carrier family protein"/>
    <property type="match status" value="1"/>
</dbReference>
<dbReference type="Gene3D" id="1.50.40.10">
    <property type="entry name" value="Mitochondrial carrier domain"/>
    <property type="match status" value="1"/>
</dbReference>
<dbReference type="InterPro" id="IPR002067">
    <property type="entry name" value="Mit_carrier"/>
</dbReference>
<dbReference type="InterPro" id="IPR018108">
    <property type="entry name" value="Mitochondrial_sb/sol_carrier"/>
</dbReference>
<dbReference type="InterPro" id="IPR023395">
    <property type="entry name" value="Mt_carrier_dom_sf"/>
</dbReference>
<dbReference type="PANTHER" id="PTHR24089">
    <property type="entry name" value="SOLUTE CARRIER FAMILY 25"/>
    <property type="match status" value="1"/>
</dbReference>
<dbReference type="Pfam" id="PF00153">
    <property type="entry name" value="Mito_carr"/>
    <property type="match status" value="3"/>
</dbReference>
<dbReference type="PRINTS" id="PR00926">
    <property type="entry name" value="MITOCARRIER"/>
</dbReference>
<dbReference type="SUPFAM" id="SSF103506">
    <property type="entry name" value="Mitochondrial carrier"/>
    <property type="match status" value="1"/>
</dbReference>
<dbReference type="PROSITE" id="PS50920">
    <property type="entry name" value="SOLCAR"/>
    <property type="match status" value="3"/>
</dbReference>